<sequence>MEINEKLLRQIIEDVLRDMKGSDKPVSFNAPAASTAPQTAAPAGDGFLTEVGEARQGTQQDEVIIAVGPAFGLAQTVNIVGLPHKSILREVIAGIEEEGIKARVIRCFKSSDVAFVAVEGNRLSGSGISIGIQSKGTTVIHQQGLPPLSNLELFPQAPLLTLETYRQIGKNAARYAKRESPQPVPTLNDQMARPKYQAKSAILHIKETKYVVTGKNPQELRVAL</sequence>
<feature type="chain" id="PRO_0000391459" description="Propanediol dehydratase medium subunit">
    <location>
        <begin position="1"/>
        <end position="224"/>
    </location>
</feature>
<feature type="region of interest" description="Targets protein to the BMC" evidence="7">
    <location>
        <begin position="1"/>
        <end position="18"/>
    </location>
</feature>
<feature type="mutagenesis site" description="Enzyme no longer associated with BMCs, no effect on enzyme activity." evidence="7">
    <location>
        <begin position="2"/>
        <end position="35"/>
    </location>
</feature>
<organism>
    <name type="scientific">Salmonella typhimurium (strain LT2 / SGSC1412 / ATCC 700720)</name>
    <dbReference type="NCBI Taxonomy" id="99287"/>
    <lineage>
        <taxon>Bacteria</taxon>
        <taxon>Pseudomonadati</taxon>
        <taxon>Pseudomonadota</taxon>
        <taxon>Gammaproteobacteria</taxon>
        <taxon>Enterobacterales</taxon>
        <taxon>Enterobacteriaceae</taxon>
        <taxon>Salmonella</taxon>
    </lineage>
</organism>
<evidence type="ECO:0000269" key="1">
    <source>
    </source>
</evidence>
<evidence type="ECO:0000269" key="2">
    <source>
    </source>
</evidence>
<evidence type="ECO:0000269" key="3">
    <source>
    </source>
</evidence>
<evidence type="ECO:0000269" key="4">
    <source>
    </source>
</evidence>
<evidence type="ECO:0000269" key="5">
    <source>
    </source>
</evidence>
<evidence type="ECO:0000269" key="6">
    <source>
    </source>
</evidence>
<evidence type="ECO:0000269" key="7">
    <source>
    </source>
</evidence>
<evidence type="ECO:0000269" key="8">
    <source>
    </source>
</evidence>
<evidence type="ECO:0000269" key="9">
    <source>
    </source>
</evidence>
<evidence type="ECO:0000269" key="10">
    <source>
    </source>
</evidence>
<evidence type="ECO:0000269" key="11">
    <source>
    </source>
</evidence>
<evidence type="ECO:0000303" key="12">
    <source>
    </source>
</evidence>
<evidence type="ECO:0000305" key="13"/>
<evidence type="ECO:0000305" key="14">
    <source>
    </source>
</evidence>
<evidence type="ECO:0000305" key="15">
    <source>
    </source>
</evidence>
<evidence type="ECO:0000305" key="16">
    <source>
    </source>
</evidence>
<evidence type="ECO:0000305" key="17">
    <source>
    </source>
</evidence>
<reference key="1">
    <citation type="journal article" date="1997" name="J. Bacteriol.">
        <title>Propanediol utilization genes (pdu) of Salmonella typhimurium: three genes for the propanediol dehydratase.</title>
        <authorList>
            <person name="Bobik T.A."/>
            <person name="Xu Y."/>
            <person name="Jeter R.M."/>
            <person name="Otto K.E."/>
            <person name="Roth J.R."/>
        </authorList>
    </citation>
    <scope>NUCLEOTIDE SEQUENCE [GENOMIC DNA]</scope>
    <scope>FUNCTION</scope>
    <scope>CATALYTIC ACTIVITY</scope>
    <scope>SUBUNIT</scope>
    <source>
        <strain>LT2</strain>
    </source>
</reference>
<reference key="2">
    <citation type="journal article" date="1999" name="J. Bacteriol.">
        <title>The propanediol utilization (pdu) operon of Salmonella enterica serovar typhimurium LT2 includes genes necessary for formation of polyhedral organelles involved in coenzyme B(12)-dependent 1, 2-propanediol degradation.</title>
        <authorList>
            <person name="Bobik T.A."/>
            <person name="Havemann G.D."/>
            <person name="Busch R.J."/>
            <person name="Williams D.S."/>
            <person name="Aldrich H.C."/>
        </authorList>
    </citation>
    <scope>NUCLEOTIDE SEQUENCE [GENOMIC DNA]</scope>
    <scope>PATHWAY</scope>
    <scope>SUBCELLULAR LOCATION</scope>
    <scope>INDUCTION</scope>
    <source>
        <strain>LT2</strain>
    </source>
</reference>
<reference key="3">
    <citation type="journal article" date="2001" name="Nature">
        <title>Complete genome sequence of Salmonella enterica serovar Typhimurium LT2.</title>
        <authorList>
            <person name="McClelland M."/>
            <person name="Sanderson K.E."/>
            <person name="Spieth J."/>
            <person name="Clifton S.W."/>
            <person name="Latreille P."/>
            <person name="Courtney L."/>
            <person name="Porwollik S."/>
            <person name="Ali J."/>
            <person name="Dante M."/>
            <person name="Du F."/>
            <person name="Hou S."/>
            <person name="Layman D."/>
            <person name="Leonard S."/>
            <person name="Nguyen C."/>
            <person name="Scott K."/>
            <person name="Holmes A."/>
            <person name="Grewal N."/>
            <person name="Mulvaney E."/>
            <person name="Ryan E."/>
            <person name="Sun H."/>
            <person name="Florea L."/>
            <person name="Miller W."/>
            <person name="Stoneking T."/>
            <person name="Nhan M."/>
            <person name="Waterston R."/>
            <person name="Wilson R.K."/>
        </authorList>
    </citation>
    <scope>NUCLEOTIDE SEQUENCE [LARGE SCALE GENOMIC DNA]</scope>
    <source>
        <strain>LT2 / SGSC1412 / ATCC 700720</strain>
    </source>
</reference>
<reference key="4">
    <citation type="journal article" date="1990" name="J. Gen. Microbiol.">
        <title>Cobalamin-dependent 1,2-propanediol utilization by Salmonella typhimurium.</title>
        <authorList>
            <person name="Jeter R.M."/>
        </authorList>
    </citation>
    <scope>COFACTOR</scope>
</reference>
<reference key="5">
    <citation type="journal article" date="1992" name="J. Bacteriol.">
        <title>A single regulatory gene integrates control of vitamin B12 synthesis and propanediol degradation.</title>
        <authorList>
            <person name="Bobik T.A."/>
            <person name="Ailion M."/>
            <person name="Roth J.R."/>
        </authorList>
    </citation>
    <scope>INDUCTION</scope>
</reference>
<reference key="6">
    <citation type="journal article" date="1997" name="J. Bacteriol.">
        <title>Genetic characterization of the pdu operon: use of 1,2-propanediol in Salmonella typhimurium.</title>
        <authorList>
            <person name="Walter D."/>
            <person name="Ailion M."/>
            <person name="Roth J."/>
        </authorList>
    </citation>
    <scope>DISRUPTION PHENOTYPE</scope>
    <scope>FUNCTION IN PROPANEDIOL UTILIZATION</scope>
    <source>
        <strain>LT2</strain>
    </source>
</reference>
<reference key="7">
    <citation type="journal article" date="2002" name="J. Bacteriol.">
        <title>PduA is a shell protein of polyhedral organelles involved in coenzyme B(12)-dependent degradation of 1,2-propanediol in Salmonella enterica serovar typhimurium LT2.</title>
        <authorList>
            <person name="Havemann G.D."/>
            <person name="Sampson E.M."/>
            <person name="Bobik T.A."/>
        </authorList>
    </citation>
    <scope>SUBCELLULAR LOCATION</scope>
    <source>
        <strain>LT2</strain>
    </source>
</reference>
<reference key="8">
    <citation type="journal article" date="2003" name="J. Bacteriol.">
        <title>Protein content of polyhedral organelles involved in coenzyme B12-dependent degradation of 1,2-propanediol in Salmonella enterica serovar Typhimurium LT2.</title>
        <authorList>
            <person name="Havemann G.D."/>
            <person name="Bobik T.A."/>
        </authorList>
    </citation>
    <scope>IDENTIFICATION BY MASS SPECTROMETRY</scope>
    <scope>SUBCELLULAR LOCATION</scope>
    <source>
        <strain>LT2</strain>
    </source>
</reference>
<reference key="9">
    <citation type="journal article" date="2006" name="J. Bacteriol.">
        <title>Conserving a volatile metabolite: a role for carboxysome-like organelles in Salmonella enterica.</title>
        <authorList>
            <person name="Penrod J.T."/>
            <person name="Roth J.R."/>
        </authorList>
    </citation>
    <scope>DISRUPTION PHENOTYPE</scope>
    <source>
        <strain>LT2</strain>
    </source>
</reference>
<reference key="10">
    <citation type="journal article" date="2011" name="J. Bacteriol.">
        <title>The N-terminal region of the medium subunit (PduD) packages adenosylcobalamin-dependent diol dehydratase (PduCDE) into the Pdu microcompartment.</title>
        <authorList>
            <person name="Fan C."/>
            <person name="Bobik T.A."/>
        </authorList>
    </citation>
    <scope>FUNCTION</scope>
    <scope>SUBCELLULAR LOCATION</scope>
    <scope>DOMAIN</scope>
    <scope>MUTAGENESIS OF 2-GLU--THR-35</scope>
    <source>
        <strain>LT2</strain>
    </source>
</reference>
<reference key="11">
    <citation type="journal article" date="2015" name="Proc. Natl. Acad. Sci. U.S.A.">
        <title>Selective molecular transport through the protein shell of a bacterial microcompartment organelle.</title>
        <authorList>
            <person name="Chowdhury C."/>
            <person name="Chun S."/>
            <person name="Pang A."/>
            <person name="Sawaya M.R."/>
            <person name="Sinha S."/>
            <person name="Yeates T.O."/>
            <person name="Bobik T.A."/>
        </authorList>
    </citation>
    <scope>ACTIVITY REGULATION</scope>
    <source>
        <strain>LT2</strain>
    </source>
</reference>
<reference key="12">
    <citation type="journal article" date="2015" name="J. Biol. Chem.">
        <title>Localization of proteins to the 1,2-propanediol utilization microcompartment by non-native signal sequences is mediated by a common hydrophobic motif.</title>
        <authorList>
            <person name="Jakobson C.M."/>
            <person name="Kim E.Y."/>
            <person name="Slininger M.F."/>
            <person name="Chien A."/>
            <person name="Tullman-Ercek D."/>
        </authorList>
    </citation>
    <scope>FUNCTION</scope>
    <scope>SUBCELLULAR LOCATION</scope>
    <scope>DOMAIN</scope>
    <source>
        <strain>LT2</strain>
    </source>
</reference>
<reference key="13">
    <citation type="journal article" date="2017" name="PLoS Comput. Biol.">
        <title>A systems-level model reveals that 1,2-Propanediol utilization microcompartments enhance pathway flux through intermediate sequestration.</title>
        <authorList>
            <person name="Jakobson C.M."/>
            <person name="Tullman-Ercek D."/>
            <person name="Slininger M.F."/>
            <person name="Mangan N.M."/>
        </authorList>
    </citation>
    <scope>SYSTEM-MODELING</scope>
    <scope>FUNCTION</scope>
    <source>
        <strain>LT2</strain>
    </source>
</reference>
<dbReference type="EC" id="4.2.1.28" evidence="7"/>
<dbReference type="EMBL" id="AF026270">
    <property type="protein sequence ID" value="AAB84103.1"/>
    <property type="molecule type" value="Genomic_DNA"/>
</dbReference>
<dbReference type="EMBL" id="AE006468">
    <property type="protein sequence ID" value="AAL20945.1"/>
    <property type="molecule type" value="Genomic_DNA"/>
</dbReference>
<dbReference type="RefSeq" id="NP_460986.1">
    <property type="nucleotide sequence ID" value="NC_003197.2"/>
</dbReference>
<dbReference type="RefSeq" id="WP_000405048.1">
    <property type="nucleotide sequence ID" value="NC_003197.2"/>
</dbReference>
<dbReference type="SMR" id="O31041"/>
<dbReference type="STRING" id="99287.STM2041"/>
<dbReference type="PaxDb" id="99287-STM2041"/>
<dbReference type="GeneID" id="1253562"/>
<dbReference type="KEGG" id="stm:STM2041"/>
<dbReference type="PATRIC" id="fig|99287.12.peg.2163"/>
<dbReference type="HOGENOM" id="CLU_104657_0_0_6"/>
<dbReference type="OMA" id="HQKDLPP"/>
<dbReference type="PhylomeDB" id="O31041"/>
<dbReference type="BioCyc" id="MetaCyc:STM2041-MONOMER"/>
<dbReference type="BioCyc" id="SENT99287:STM2041-MONOMER"/>
<dbReference type="UniPathway" id="UPA00621"/>
<dbReference type="Proteomes" id="UP000001014">
    <property type="component" value="Chromosome"/>
</dbReference>
<dbReference type="GO" id="GO:0031472">
    <property type="term" value="C:propanediol degradation polyhedral organelle"/>
    <property type="evidence" value="ECO:0000314"/>
    <property type="project" value="UniProtKB"/>
</dbReference>
<dbReference type="GO" id="GO:0031419">
    <property type="term" value="F:cobalamin binding"/>
    <property type="evidence" value="ECO:0007669"/>
    <property type="project" value="UniProtKB-KW"/>
</dbReference>
<dbReference type="GO" id="GO:0050215">
    <property type="term" value="F:propanediol dehydratase activity"/>
    <property type="evidence" value="ECO:0007669"/>
    <property type="project" value="UniProtKB-EC"/>
</dbReference>
<dbReference type="GO" id="GO:0051144">
    <property type="term" value="P:propanediol catabolic process"/>
    <property type="evidence" value="ECO:0007669"/>
    <property type="project" value="UniProtKB-UniPathway"/>
</dbReference>
<dbReference type="Gene3D" id="3.40.50.10150">
    <property type="entry name" value="B12-dependent dehydatase associated subunit"/>
    <property type="match status" value="1"/>
</dbReference>
<dbReference type="InterPro" id="IPR010254">
    <property type="entry name" value="B12-dep_deHydtase_bsu"/>
</dbReference>
<dbReference type="InterPro" id="IPR003208">
    <property type="entry name" value="Dehydtase/Dehydtase_re"/>
</dbReference>
<dbReference type="InterPro" id="IPR025541">
    <property type="entry name" value="Ppandiol/glycerol_DHydtase_msu"/>
</dbReference>
<dbReference type="NCBIfam" id="NF011616">
    <property type="entry name" value="PRK15042.1"/>
    <property type="match status" value="1"/>
</dbReference>
<dbReference type="Pfam" id="PF02288">
    <property type="entry name" value="Dehydratase_MU"/>
    <property type="match status" value="1"/>
</dbReference>
<dbReference type="PIRSF" id="PIRSF018506">
    <property type="entry name" value="Prpndl_dhdrts_md"/>
    <property type="match status" value="1"/>
</dbReference>
<dbReference type="SUPFAM" id="SSF52968">
    <property type="entry name" value="B12-dependent dehydatase associated subunit"/>
    <property type="match status" value="1"/>
</dbReference>
<comment type="function">
    <text evidence="7 9 10 17">Part of the PduCDE complex that catalyzes the dehydration of 1,2-propanediol (1,2-PD) to propionaldehyde. Required for S.typhimurium growth on 1,2-PD as the sole carbon and energy source (Probable) (PubMed:9023178). This subunit is directly targeted to the bacterial microcompartment (BMC) dedicated to 1,2-PD degradation, and is also responsible for targeting the other 2 subunits (pduC and pduE) (PubMed:21821773, PubMed:26283792).</text>
</comment>
<comment type="function">
    <text evidence="8 16">The 1,2-PD-specific bacterial microcompartment (BMC) concentrates low levels of 1,2-PD catabolic enzymes, concentrates volatile reaction intermediates thus enhancing pathway flux and keeps the level of toxic, mutagenic propionaldehyde low.</text>
</comment>
<comment type="catalytic activity">
    <reaction evidence="11">
        <text>propane-1,2-diol = propanal + H2O</text>
        <dbReference type="Rhea" id="RHEA:14569"/>
        <dbReference type="ChEBI" id="CHEBI:15377"/>
        <dbReference type="ChEBI" id="CHEBI:16997"/>
        <dbReference type="ChEBI" id="CHEBI:17153"/>
        <dbReference type="EC" id="4.2.1.28"/>
    </reaction>
</comment>
<comment type="cofactor">
    <cofactor evidence="6">
        <name>adenosylcob(III)alamin</name>
        <dbReference type="ChEBI" id="CHEBI:18408"/>
    </cofactor>
</comment>
<comment type="activity regulation">
    <text evidence="8">Inhibited by glycerol.</text>
</comment>
<comment type="pathway">
    <text evidence="14">Polyol metabolism; 1,2-propanediol degradation.</text>
</comment>
<comment type="subunit">
    <text evidence="11">The propanediol dehydratase enzyme is a heterotrimeric complex composed of a large (PduC), a medium (PduD) and a small (PduE) subunit.</text>
</comment>
<comment type="subcellular location">
    <subcellularLocation>
        <location evidence="1 2 3 7 9">Bacterial microcompartment</location>
    </subcellularLocation>
    <text evidence="14 15">Probably located inside the BMC shell.</text>
</comment>
<comment type="induction">
    <text evidence="1 4">BMC production is induced by growth on 1,2-PD vitamin B12 medium (PubMed:10498708). By either propanediol or glycerol.</text>
</comment>
<comment type="domain">
    <text evidence="7 9">The first 18 residues targets this enzyme and foreign proteins (tested with GST and eGFP) to the BMC. The cargo is only detected by Western blot in broken shells, strongly suggesting this protein is normally found inside the BMC and not on its exterior (PubMed:21821773, PubMed:26283792). PduD and PduP compete for encapsulation in BMCs, suggesting PduD also binds to PduA and/or PduJ (PubMed:26283792).</text>
</comment>
<comment type="disruption phenotype">
    <text evidence="5 10">Cells lacking this gene are defective in aerobic degradation of propanediol and display no propanediol dehydratase activity. A triple pduC-pduD-pduE deletion releases no acetaldehyde when grown on propanediol (PubMed:16585748).</text>
</comment>
<comment type="miscellaneous">
    <text evidence="1 3">Bacterial microcompartments (BMC) 100-200 nm in cross section are formed during aerobic growth on minimal 1,2-PD-B12 or anaerobic growth on 1,2-PD-tetrathionate medium, but not during aerobic growth on glucose, anerobic growth on glucose or pyruvate-tetrathionate (PubMed:10498708). BMCs can constitute up to 10% of total cell protein (PubMed:12923081).</text>
</comment>
<comment type="similarity">
    <text evidence="13">Belongs to the diol/glycerol dehydratase medium subunit family.</text>
</comment>
<protein>
    <recommendedName>
        <fullName>Propanediol dehydratase medium subunit</fullName>
        <ecNumber evidence="7">4.2.1.28</ecNumber>
    </recommendedName>
    <alternativeName>
        <fullName>Diol dehydratase medium subunit</fullName>
        <shortName>DDH medium subunit</shortName>
    </alternativeName>
    <alternativeName>
        <fullName>Propanediol utilization protein PduD</fullName>
    </alternativeName>
</protein>
<name>PDUD_SALTY</name>
<keyword id="KW-1283">Bacterial microcompartment</keyword>
<keyword id="KW-0846">Cobalamin</keyword>
<keyword id="KW-0170">Cobalt</keyword>
<keyword id="KW-0456">Lyase</keyword>
<keyword id="KW-1185">Reference proteome</keyword>
<proteinExistence type="evidence at protein level"/>
<accession>O31041</accession>
<accession>Q7BV84</accession>
<gene>
    <name evidence="12" type="primary">pduD</name>
    <name type="ordered locus">STM2041</name>
</gene>